<evidence type="ECO:0000255" key="1">
    <source>
        <dbReference type="HAMAP-Rule" id="MF_00412"/>
    </source>
</evidence>
<evidence type="ECO:0000305" key="2"/>
<keyword id="KW-0028">Amino-acid biosynthesis</keyword>
<keyword id="KW-0963">Cytoplasm</keyword>
<keyword id="KW-0521">NADP</keyword>
<keyword id="KW-0560">Oxidoreductase</keyword>
<keyword id="KW-0641">Proline biosynthesis</keyword>
<keyword id="KW-1185">Reference proteome</keyword>
<gene>
    <name evidence="1" type="primary">proA</name>
    <name type="ordered locus">TP_0350</name>
</gene>
<comment type="function">
    <text evidence="1">Catalyzes the NADPH-dependent reduction of L-glutamate 5-phosphate into L-glutamate 5-semialdehyde and phosphate. The product spontaneously undergoes cyclization to form 1-pyrroline-5-carboxylate.</text>
</comment>
<comment type="catalytic activity">
    <reaction evidence="1">
        <text>L-glutamate 5-semialdehyde + phosphate + NADP(+) = L-glutamyl 5-phosphate + NADPH + H(+)</text>
        <dbReference type="Rhea" id="RHEA:19541"/>
        <dbReference type="ChEBI" id="CHEBI:15378"/>
        <dbReference type="ChEBI" id="CHEBI:43474"/>
        <dbReference type="ChEBI" id="CHEBI:57783"/>
        <dbReference type="ChEBI" id="CHEBI:58066"/>
        <dbReference type="ChEBI" id="CHEBI:58274"/>
        <dbReference type="ChEBI" id="CHEBI:58349"/>
        <dbReference type="EC" id="1.2.1.41"/>
    </reaction>
</comment>
<comment type="pathway">
    <text evidence="1">Amino-acid biosynthesis; L-proline biosynthesis; L-glutamate 5-semialdehyde from L-glutamate: step 2/2.</text>
</comment>
<comment type="subcellular location">
    <subcellularLocation>
        <location evidence="1">Cytoplasm</location>
    </subcellularLocation>
</comment>
<comment type="similarity">
    <text evidence="1">Belongs to the gamma-glutamyl phosphate reductase family.</text>
</comment>
<organism>
    <name type="scientific">Treponema pallidum (strain Nichols)</name>
    <dbReference type="NCBI Taxonomy" id="243276"/>
    <lineage>
        <taxon>Bacteria</taxon>
        <taxon>Pseudomonadati</taxon>
        <taxon>Spirochaetota</taxon>
        <taxon>Spirochaetia</taxon>
        <taxon>Spirochaetales</taxon>
        <taxon>Treponemataceae</taxon>
        <taxon>Treponema</taxon>
    </lineage>
</organism>
<sequence>MVEVYARLRAAVARLAVCSAAEKDGALRAVRDALHAQREDILRANAQDLARAREAGLAAPLVARLALSEHLLEDMLRSLTVLSLQRDPIGEIIEGYTLANGLEIRKVRVPLGVVAVIYESRPNVTVDAFALAYKSGNAVLLRAGSAASYSNAPLLRAIHVGLKKAHGVVDAVAVPPVLEEKYGDVDHILRARGFIDAVFPRGGAALIRRVVEGAHVPVIETGCGVCHLYVDESANIDVALQIAENAKLQKPAACNSVETLLVHRAVARPFLHRVQEIFATCEETTRKPGGVDFFCDAESFSLLTERGARKNVFHAQAETWDREYLDYQVSVRVVPNLEEALRHIARHSTKHSEVIVTRDRARARRFHQEVDAACVYVNASSRFTDGGQFGMGAEIGVSTQKLHARGPMGLCALTTSKYLIDGEGQVRP</sequence>
<dbReference type="EC" id="1.2.1.41" evidence="1"/>
<dbReference type="EMBL" id="U61535">
    <property type="protein sequence ID" value="AAB39980.1"/>
    <property type="molecule type" value="Genomic_DNA"/>
</dbReference>
<dbReference type="EMBL" id="AE000520">
    <property type="protein sequence ID" value="AAC65335.1"/>
    <property type="molecule type" value="Genomic_DNA"/>
</dbReference>
<dbReference type="PIR" id="E71336">
    <property type="entry name" value="E71336"/>
</dbReference>
<dbReference type="RefSeq" id="WP_010881798.1">
    <property type="nucleotide sequence ID" value="NC_000919.1"/>
</dbReference>
<dbReference type="RefSeq" id="WP_014342789.1">
    <property type="nucleotide sequence ID" value="NC_021490.2"/>
</dbReference>
<dbReference type="SMR" id="P74935"/>
<dbReference type="IntAct" id="P74935">
    <property type="interactions" value="2"/>
</dbReference>
<dbReference type="STRING" id="243276.TP_0350"/>
<dbReference type="EnsemblBacteria" id="AAC65335">
    <property type="protein sequence ID" value="AAC65335"/>
    <property type="gene ID" value="TP_0350"/>
</dbReference>
<dbReference type="KEGG" id="tpa:TP_0350"/>
<dbReference type="eggNOG" id="COG0014">
    <property type="taxonomic scope" value="Bacteria"/>
</dbReference>
<dbReference type="HOGENOM" id="CLU_030231_0_0_12"/>
<dbReference type="OrthoDB" id="9809970at2"/>
<dbReference type="UniPathway" id="UPA00098">
    <property type="reaction ID" value="UER00360"/>
</dbReference>
<dbReference type="Proteomes" id="UP000000811">
    <property type="component" value="Chromosome"/>
</dbReference>
<dbReference type="GO" id="GO:0005737">
    <property type="term" value="C:cytoplasm"/>
    <property type="evidence" value="ECO:0007669"/>
    <property type="project" value="UniProtKB-SubCell"/>
</dbReference>
<dbReference type="GO" id="GO:0004350">
    <property type="term" value="F:glutamate-5-semialdehyde dehydrogenase activity"/>
    <property type="evidence" value="ECO:0007669"/>
    <property type="project" value="UniProtKB-UniRule"/>
</dbReference>
<dbReference type="GO" id="GO:0050661">
    <property type="term" value="F:NADP binding"/>
    <property type="evidence" value="ECO:0007669"/>
    <property type="project" value="InterPro"/>
</dbReference>
<dbReference type="GO" id="GO:0055129">
    <property type="term" value="P:L-proline biosynthetic process"/>
    <property type="evidence" value="ECO:0007669"/>
    <property type="project" value="UniProtKB-UniRule"/>
</dbReference>
<dbReference type="CDD" id="cd07079">
    <property type="entry name" value="ALDH_F18-19_ProA-GPR"/>
    <property type="match status" value="1"/>
</dbReference>
<dbReference type="FunFam" id="3.40.309.10:FF:000006">
    <property type="entry name" value="Gamma-glutamyl phosphate reductase"/>
    <property type="match status" value="1"/>
</dbReference>
<dbReference type="Gene3D" id="3.40.605.10">
    <property type="entry name" value="Aldehyde Dehydrogenase, Chain A, domain 1"/>
    <property type="match status" value="1"/>
</dbReference>
<dbReference type="Gene3D" id="3.40.309.10">
    <property type="entry name" value="Aldehyde Dehydrogenase, Chain A, domain 2"/>
    <property type="match status" value="1"/>
</dbReference>
<dbReference type="HAMAP" id="MF_00412">
    <property type="entry name" value="ProA"/>
    <property type="match status" value="1"/>
</dbReference>
<dbReference type="InterPro" id="IPR016161">
    <property type="entry name" value="Ald_DH/histidinol_DH"/>
</dbReference>
<dbReference type="InterPro" id="IPR016163">
    <property type="entry name" value="Ald_DH_C"/>
</dbReference>
<dbReference type="InterPro" id="IPR016162">
    <property type="entry name" value="Ald_DH_N"/>
</dbReference>
<dbReference type="InterPro" id="IPR015590">
    <property type="entry name" value="Aldehyde_DH_dom"/>
</dbReference>
<dbReference type="InterPro" id="IPR020593">
    <property type="entry name" value="G-glutamylP_reductase_CS"/>
</dbReference>
<dbReference type="InterPro" id="IPR012134">
    <property type="entry name" value="Glu-5-SA_DH"/>
</dbReference>
<dbReference type="InterPro" id="IPR000965">
    <property type="entry name" value="GPR_dom"/>
</dbReference>
<dbReference type="NCBIfam" id="NF001221">
    <property type="entry name" value="PRK00197.1"/>
    <property type="match status" value="1"/>
</dbReference>
<dbReference type="NCBIfam" id="TIGR00407">
    <property type="entry name" value="proA"/>
    <property type="match status" value="1"/>
</dbReference>
<dbReference type="PANTHER" id="PTHR11063:SF8">
    <property type="entry name" value="DELTA-1-PYRROLINE-5-CARBOXYLATE SYNTHASE"/>
    <property type="match status" value="1"/>
</dbReference>
<dbReference type="PANTHER" id="PTHR11063">
    <property type="entry name" value="GLUTAMATE SEMIALDEHYDE DEHYDROGENASE"/>
    <property type="match status" value="1"/>
</dbReference>
<dbReference type="Pfam" id="PF00171">
    <property type="entry name" value="Aldedh"/>
    <property type="match status" value="1"/>
</dbReference>
<dbReference type="PIRSF" id="PIRSF000151">
    <property type="entry name" value="GPR"/>
    <property type="match status" value="1"/>
</dbReference>
<dbReference type="SUPFAM" id="SSF53720">
    <property type="entry name" value="ALDH-like"/>
    <property type="match status" value="1"/>
</dbReference>
<dbReference type="PROSITE" id="PS01223">
    <property type="entry name" value="PROA"/>
    <property type="match status" value="1"/>
</dbReference>
<reference key="1">
    <citation type="journal article" date="1997" name="DNA Seq.">
        <title>Nucleotide sequences of the proA and proB genes of Treponema pallidum, the syphilis agent.</title>
        <authorList>
            <person name="Stamm L.V."/>
            <person name="Barnes N.Y."/>
        </authorList>
    </citation>
    <scope>NUCLEOTIDE SEQUENCE [GENOMIC DNA]</scope>
    <source>
        <strain>Nichols</strain>
    </source>
</reference>
<reference key="2">
    <citation type="journal article" date="1998" name="Science">
        <title>Complete genome sequence of Treponema pallidum, the syphilis spirochete.</title>
        <authorList>
            <person name="Fraser C.M."/>
            <person name="Norris S.J."/>
            <person name="Weinstock G.M."/>
            <person name="White O."/>
            <person name="Sutton G.G."/>
            <person name="Dodson R.J."/>
            <person name="Gwinn M.L."/>
            <person name="Hickey E.K."/>
            <person name="Clayton R.A."/>
            <person name="Ketchum K.A."/>
            <person name="Sodergren E."/>
            <person name="Hardham J.M."/>
            <person name="McLeod M.P."/>
            <person name="Salzberg S.L."/>
            <person name="Peterson J.D."/>
            <person name="Khalak H.G."/>
            <person name="Richardson D.L."/>
            <person name="Howell J.K."/>
            <person name="Chidambaram M."/>
            <person name="Utterback T.R."/>
            <person name="McDonald L.A."/>
            <person name="Artiach P."/>
            <person name="Bowman C."/>
            <person name="Cotton M.D."/>
            <person name="Fujii C."/>
            <person name="Garland S.A."/>
            <person name="Hatch B."/>
            <person name="Horst K."/>
            <person name="Roberts K.M."/>
            <person name="Sandusky M."/>
            <person name="Weidman J.F."/>
            <person name="Smith H.O."/>
            <person name="Venter J.C."/>
        </authorList>
    </citation>
    <scope>NUCLEOTIDE SEQUENCE [LARGE SCALE GENOMIC DNA]</scope>
    <source>
        <strain>Nichols</strain>
    </source>
</reference>
<name>PROA_TREPA</name>
<accession>P74935</accession>
<accession>O83370</accession>
<proteinExistence type="inferred from homology"/>
<feature type="chain" id="PRO_0000189806" description="Gamma-glutamyl phosphate reductase">
    <location>
        <begin position="1"/>
        <end position="428"/>
    </location>
</feature>
<feature type="sequence conflict" description="In Ref. 1; AAB39980." evidence="2" ref="1">
    <original>P</original>
    <variation>A</variation>
    <location>
        <position position="153"/>
    </location>
</feature>
<protein>
    <recommendedName>
        <fullName evidence="1">Gamma-glutamyl phosphate reductase</fullName>
        <shortName evidence="1">GPR</shortName>
        <ecNumber evidence="1">1.2.1.41</ecNumber>
    </recommendedName>
    <alternativeName>
        <fullName evidence="1">Glutamate-5-semialdehyde dehydrogenase</fullName>
    </alternativeName>
    <alternativeName>
        <fullName evidence="1">Glutamyl-gamma-semialdehyde dehydrogenase</fullName>
        <shortName evidence="1">GSA dehydrogenase</shortName>
    </alternativeName>
</protein>